<accession>A1K724</accession>
<feature type="chain" id="PRO_1000044842" description="Chaperone protein HscA homolog">
    <location>
        <begin position="1"/>
        <end position="622"/>
    </location>
</feature>
<protein>
    <recommendedName>
        <fullName evidence="1">Chaperone protein HscA homolog</fullName>
    </recommendedName>
</protein>
<name>HSCA_AZOSB</name>
<keyword id="KW-0067">ATP-binding</keyword>
<keyword id="KW-0143">Chaperone</keyword>
<keyword id="KW-0547">Nucleotide-binding</keyword>
<keyword id="KW-1185">Reference proteome</keyword>
<proteinExistence type="inferred from homology"/>
<dbReference type="EMBL" id="AM406670">
    <property type="protein sequence ID" value="CAL94629.1"/>
    <property type="molecule type" value="Genomic_DNA"/>
</dbReference>
<dbReference type="RefSeq" id="WP_011765743.1">
    <property type="nucleotide sequence ID" value="NC_008702.1"/>
</dbReference>
<dbReference type="SMR" id="A1K724"/>
<dbReference type="STRING" id="62928.azo2012"/>
<dbReference type="KEGG" id="azo:azo2012"/>
<dbReference type="eggNOG" id="COG0443">
    <property type="taxonomic scope" value="Bacteria"/>
</dbReference>
<dbReference type="HOGENOM" id="CLU_005965_2_4_4"/>
<dbReference type="OrthoDB" id="9766019at2"/>
<dbReference type="Proteomes" id="UP000002588">
    <property type="component" value="Chromosome"/>
</dbReference>
<dbReference type="GO" id="GO:0005524">
    <property type="term" value="F:ATP binding"/>
    <property type="evidence" value="ECO:0007669"/>
    <property type="project" value="UniProtKB-KW"/>
</dbReference>
<dbReference type="GO" id="GO:0016887">
    <property type="term" value="F:ATP hydrolysis activity"/>
    <property type="evidence" value="ECO:0007669"/>
    <property type="project" value="UniProtKB-UniRule"/>
</dbReference>
<dbReference type="GO" id="GO:0140662">
    <property type="term" value="F:ATP-dependent protein folding chaperone"/>
    <property type="evidence" value="ECO:0007669"/>
    <property type="project" value="InterPro"/>
</dbReference>
<dbReference type="GO" id="GO:0051082">
    <property type="term" value="F:unfolded protein binding"/>
    <property type="evidence" value="ECO:0007669"/>
    <property type="project" value="InterPro"/>
</dbReference>
<dbReference type="GO" id="GO:0016226">
    <property type="term" value="P:iron-sulfur cluster assembly"/>
    <property type="evidence" value="ECO:0007669"/>
    <property type="project" value="InterPro"/>
</dbReference>
<dbReference type="CDD" id="cd10236">
    <property type="entry name" value="ASKHA_NBD_HSP70_HscA"/>
    <property type="match status" value="1"/>
</dbReference>
<dbReference type="FunFam" id="3.30.420.40:FF:000046">
    <property type="entry name" value="Chaperone protein HscA"/>
    <property type="match status" value="1"/>
</dbReference>
<dbReference type="FunFam" id="2.60.34.10:FF:000005">
    <property type="entry name" value="Chaperone protein HscA homolog"/>
    <property type="match status" value="1"/>
</dbReference>
<dbReference type="Gene3D" id="1.20.1270.10">
    <property type="match status" value="1"/>
</dbReference>
<dbReference type="Gene3D" id="3.30.420.40">
    <property type="match status" value="2"/>
</dbReference>
<dbReference type="Gene3D" id="3.90.640.10">
    <property type="entry name" value="Actin, Chain A, domain 4"/>
    <property type="match status" value="1"/>
</dbReference>
<dbReference type="Gene3D" id="2.60.34.10">
    <property type="entry name" value="Substrate Binding Domain Of DNAk, Chain A, domain 1"/>
    <property type="match status" value="1"/>
</dbReference>
<dbReference type="HAMAP" id="MF_00679">
    <property type="entry name" value="HscA"/>
    <property type="match status" value="1"/>
</dbReference>
<dbReference type="InterPro" id="IPR043129">
    <property type="entry name" value="ATPase_NBD"/>
</dbReference>
<dbReference type="InterPro" id="IPR018181">
    <property type="entry name" value="Heat_shock_70_CS"/>
</dbReference>
<dbReference type="InterPro" id="IPR042039">
    <property type="entry name" value="HscA_NBD"/>
</dbReference>
<dbReference type="InterPro" id="IPR029048">
    <property type="entry name" value="HSP70_C_sf"/>
</dbReference>
<dbReference type="InterPro" id="IPR029047">
    <property type="entry name" value="HSP70_peptide-bd_sf"/>
</dbReference>
<dbReference type="InterPro" id="IPR013126">
    <property type="entry name" value="Hsp_70_fam"/>
</dbReference>
<dbReference type="InterPro" id="IPR010236">
    <property type="entry name" value="ISC_FeS_clus_asmbl_HscA"/>
</dbReference>
<dbReference type="NCBIfam" id="TIGR01991">
    <property type="entry name" value="HscA"/>
    <property type="match status" value="1"/>
</dbReference>
<dbReference type="NCBIfam" id="NF003520">
    <property type="entry name" value="PRK05183.1"/>
    <property type="match status" value="1"/>
</dbReference>
<dbReference type="PANTHER" id="PTHR19375">
    <property type="entry name" value="HEAT SHOCK PROTEIN 70KDA"/>
    <property type="match status" value="1"/>
</dbReference>
<dbReference type="Pfam" id="PF00012">
    <property type="entry name" value="HSP70"/>
    <property type="match status" value="1"/>
</dbReference>
<dbReference type="PRINTS" id="PR00301">
    <property type="entry name" value="HEATSHOCK70"/>
</dbReference>
<dbReference type="SUPFAM" id="SSF53067">
    <property type="entry name" value="Actin-like ATPase domain"/>
    <property type="match status" value="2"/>
</dbReference>
<dbReference type="SUPFAM" id="SSF100934">
    <property type="entry name" value="Heat shock protein 70kD (HSP70), C-terminal subdomain"/>
    <property type="match status" value="1"/>
</dbReference>
<dbReference type="SUPFAM" id="SSF100920">
    <property type="entry name" value="Heat shock protein 70kD (HSP70), peptide-binding domain"/>
    <property type="match status" value="1"/>
</dbReference>
<dbReference type="PROSITE" id="PS00297">
    <property type="entry name" value="HSP70_1"/>
    <property type="match status" value="1"/>
</dbReference>
<dbReference type="PROSITE" id="PS00329">
    <property type="entry name" value="HSP70_2"/>
    <property type="match status" value="1"/>
</dbReference>
<dbReference type="PROSITE" id="PS01036">
    <property type="entry name" value="HSP70_3"/>
    <property type="match status" value="1"/>
</dbReference>
<organism>
    <name type="scientific">Azoarcus sp. (strain BH72)</name>
    <dbReference type="NCBI Taxonomy" id="418699"/>
    <lineage>
        <taxon>Bacteria</taxon>
        <taxon>Pseudomonadati</taxon>
        <taxon>Pseudomonadota</taxon>
        <taxon>Betaproteobacteria</taxon>
        <taxon>Rhodocyclales</taxon>
        <taxon>Zoogloeaceae</taxon>
        <taxon>Azoarcus</taxon>
    </lineage>
</organism>
<sequence>MALLQIAEPGMSAEPHKHRLAVGIDLGTTNSLVATVRNGLSVCLADEEGRAMLPSIVRYRADGAVQVGHAAAPFQATDPKNTIVSAKRFMGRGLKDVAYVEAMPYDFEDAPGMVRLRTVQGVKSPVEVSAEILRALRERAEASLGGPLTGAVITVPAYFDDAQRQATKDAARLAGLEVLRLLNEPTAAAVAYGLDNAAEGVYAVYDLGGGTFDLSVLKLSRGVFEVLSTNGDAALGGDDFDHRLFCWVLDKARIAPPSTEDARRLQLKAREAKELLTACESAQIQCRLASGEEVDLVVTREAFAEMTAHLVKKTLGPVRKALRDAGLAPEDIKGVVMVGGATRMPHIQRAVAEYFGQEPLNNLDPDKVVALGAAIQANVLAGNRASEDDWLLLDVIPLSLGLETMGGLVEKVVPRNSTLPIARAQEFTTFKDGQTAMAFHVVQGERELVADCRSLARFELRGIPPMAAGAARIRVTFQVDADGLLSVSAREMSSGVEASVLVKPSYGLSDDEISGMLREGMERAGDDMAARALREQQVEADRVIEATEHALAADGSLLNAEERASIDAAIDALRALRAGTDHRAIKAGIDALSRATDEFAARRMDHSIRAALTGHKLDEFQT</sequence>
<reference key="1">
    <citation type="journal article" date="2006" name="Nat. Biotechnol.">
        <title>Complete genome of the mutualistic, N2-fixing grass endophyte Azoarcus sp. strain BH72.</title>
        <authorList>
            <person name="Krause A."/>
            <person name="Ramakumar A."/>
            <person name="Bartels D."/>
            <person name="Battistoni F."/>
            <person name="Bekel T."/>
            <person name="Boch J."/>
            <person name="Boehm M."/>
            <person name="Friedrich F."/>
            <person name="Hurek T."/>
            <person name="Krause L."/>
            <person name="Linke B."/>
            <person name="McHardy A.C."/>
            <person name="Sarkar A."/>
            <person name="Schneiker S."/>
            <person name="Syed A.A."/>
            <person name="Thauer R."/>
            <person name="Vorhoelter F.-J."/>
            <person name="Weidner S."/>
            <person name="Puehler A."/>
            <person name="Reinhold-Hurek B."/>
            <person name="Kaiser O."/>
            <person name="Goesmann A."/>
        </authorList>
    </citation>
    <scope>NUCLEOTIDE SEQUENCE [LARGE SCALE GENOMIC DNA]</scope>
    <source>
        <strain>BH72</strain>
    </source>
</reference>
<comment type="function">
    <text evidence="1">Chaperone involved in the maturation of iron-sulfur cluster-containing proteins. Has a low intrinsic ATPase activity which is markedly stimulated by HscB.</text>
</comment>
<comment type="similarity">
    <text evidence="1">Belongs to the heat shock protein 70 family.</text>
</comment>
<gene>
    <name evidence="1" type="primary">hscA</name>
    <name type="ordered locus">azo2012</name>
</gene>
<evidence type="ECO:0000255" key="1">
    <source>
        <dbReference type="HAMAP-Rule" id="MF_00679"/>
    </source>
</evidence>